<dbReference type="EC" id="6.3.2.4" evidence="2"/>
<dbReference type="EMBL" id="CP000950">
    <property type="protein sequence ID" value="ACA69783.1"/>
    <property type="molecule type" value="Genomic_DNA"/>
</dbReference>
<dbReference type="RefSeq" id="WP_002210432.1">
    <property type="nucleotide sequence ID" value="NZ_CP009792.1"/>
</dbReference>
<dbReference type="SMR" id="B1JK79"/>
<dbReference type="KEGG" id="ypy:YPK_3516"/>
<dbReference type="PATRIC" id="fig|502800.11.peg.4259"/>
<dbReference type="UniPathway" id="UPA00219"/>
<dbReference type="GO" id="GO:0005829">
    <property type="term" value="C:cytosol"/>
    <property type="evidence" value="ECO:0007669"/>
    <property type="project" value="TreeGrafter"/>
</dbReference>
<dbReference type="GO" id="GO:0005524">
    <property type="term" value="F:ATP binding"/>
    <property type="evidence" value="ECO:0007669"/>
    <property type="project" value="UniProtKB-KW"/>
</dbReference>
<dbReference type="GO" id="GO:0008716">
    <property type="term" value="F:D-alanine-D-alanine ligase activity"/>
    <property type="evidence" value="ECO:0007669"/>
    <property type="project" value="UniProtKB-UniRule"/>
</dbReference>
<dbReference type="GO" id="GO:0046872">
    <property type="term" value="F:metal ion binding"/>
    <property type="evidence" value="ECO:0007669"/>
    <property type="project" value="UniProtKB-KW"/>
</dbReference>
<dbReference type="GO" id="GO:0071555">
    <property type="term" value="P:cell wall organization"/>
    <property type="evidence" value="ECO:0007669"/>
    <property type="project" value="UniProtKB-KW"/>
</dbReference>
<dbReference type="GO" id="GO:0009252">
    <property type="term" value="P:peptidoglycan biosynthetic process"/>
    <property type="evidence" value="ECO:0007669"/>
    <property type="project" value="UniProtKB-UniRule"/>
</dbReference>
<dbReference type="GO" id="GO:0008360">
    <property type="term" value="P:regulation of cell shape"/>
    <property type="evidence" value="ECO:0007669"/>
    <property type="project" value="UniProtKB-KW"/>
</dbReference>
<dbReference type="FunFam" id="3.30.1490.20:FF:000007">
    <property type="entry name" value="D-alanine--D-alanine ligase"/>
    <property type="match status" value="1"/>
</dbReference>
<dbReference type="FunFam" id="3.30.470.20:FF:000008">
    <property type="entry name" value="D-alanine--D-alanine ligase"/>
    <property type="match status" value="1"/>
</dbReference>
<dbReference type="FunFam" id="3.40.50.20:FF:000013">
    <property type="entry name" value="D-alanine--D-alanine ligase"/>
    <property type="match status" value="1"/>
</dbReference>
<dbReference type="Gene3D" id="3.40.50.20">
    <property type="match status" value="1"/>
</dbReference>
<dbReference type="Gene3D" id="3.30.1490.20">
    <property type="entry name" value="ATP-grasp fold, A domain"/>
    <property type="match status" value="1"/>
</dbReference>
<dbReference type="Gene3D" id="3.30.470.20">
    <property type="entry name" value="ATP-grasp fold, B domain"/>
    <property type="match status" value="1"/>
</dbReference>
<dbReference type="HAMAP" id="MF_00047">
    <property type="entry name" value="Dala_Dala_lig"/>
    <property type="match status" value="1"/>
</dbReference>
<dbReference type="InterPro" id="IPR011761">
    <property type="entry name" value="ATP-grasp"/>
</dbReference>
<dbReference type="InterPro" id="IPR013815">
    <property type="entry name" value="ATP_grasp_subdomain_1"/>
</dbReference>
<dbReference type="InterPro" id="IPR000291">
    <property type="entry name" value="D-Ala_lig_Van_CS"/>
</dbReference>
<dbReference type="InterPro" id="IPR005905">
    <property type="entry name" value="D_ala_D_ala"/>
</dbReference>
<dbReference type="InterPro" id="IPR011095">
    <property type="entry name" value="Dala_Dala_lig_C"/>
</dbReference>
<dbReference type="InterPro" id="IPR011127">
    <property type="entry name" value="Dala_Dala_lig_N"/>
</dbReference>
<dbReference type="InterPro" id="IPR016185">
    <property type="entry name" value="PreATP-grasp_dom_sf"/>
</dbReference>
<dbReference type="NCBIfam" id="TIGR01205">
    <property type="entry name" value="D_ala_D_alaTIGR"/>
    <property type="match status" value="1"/>
</dbReference>
<dbReference type="NCBIfam" id="NF002378">
    <property type="entry name" value="PRK01372.1"/>
    <property type="match status" value="1"/>
</dbReference>
<dbReference type="PANTHER" id="PTHR23132">
    <property type="entry name" value="D-ALANINE--D-ALANINE LIGASE"/>
    <property type="match status" value="1"/>
</dbReference>
<dbReference type="PANTHER" id="PTHR23132:SF23">
    <property type="entry name" value="D-ALANINE--D-ALANINE LIGASE B"/>
    <property type="match status" value="1"/>
</dbReference>
<dbReference type="Pfam" id="PF07478">
    <property type="entry name" value="Dala_Dala_lig_C"/>
    <property type="match status" value="1"/>
</dbReference>
<dbReference type="Pfam" id="PF01820">
    <property type="entry name" value="Dala_Dala_lig_N"/>
    <property type="match status" value="1"/>
</dbReference>
<dbReference type="PIRSF" id="PIRSF039102">
    <property type="entry name" value="Ddl/VanB"/>
    <property type="match status" value="1"/>
</dbReference>
<dbReference type="SUPFAM" id="SSF56059">
    <property type="entry name" value="Glutathione synthetase ATP-binding domain-like"/>
    <property type="match status" value="1"/>
</dbReference>
<dbReference type="SUPFAM" id="SSF52440">
    <property type="entry name" value="PreATP-grasp domain"/>
    <property type="match status" value="1"/>
</dbReference>
<dbReference type="PROSITE" id="PS50975">
    <property type="entry name" value="ATP_GRASP"/>
    <property type="match status" value="1"/>
</dbReference>
<dbReference type="PROSITE" id="PS00843">
    <property type="entry name" value="DALA_DALA_LIGASE_1"/>
    <property type="match status" value="1"/>
</dbReference>
<dbReference type="PROSITE" id="PS00844">
    <property type="entry name" value="DALA_DALA_LIGASE_2"/>
    <property type="match status" value="1"/>
</dbReference>
<accession>B1JK79</accession>
<proteinExistence type="inferred from homology"/>
<evidence type="ECO:0000250" key="1"/>
<evidence type="ECO:0000255" key="2">
    <source>
        <dbReference type="HAMAP-Rule" id="MF_00047"/>
    </source>
</evidence>
<comment type="function">
    <text evidence="2">Cell wall formation.</text>
</comment>
<comment type="catalytic activity">
    <reaction evidence="2">
        <text>2 D-alanine + ATP = D-alanyl-D-alanine + ADP + phosphate + H(+)</text>
        <dbReference type="Rhea" id="RHEA:11224"/>
        <dbReference type="ChEBI" id="CHEBI:15378"/>
        <dbReference type="ChEBI" id="CHEBI:30616"/>
        <dbReference type="ChEBI" id="CHEBI:43474"/>
        <dbReference type="ChEBI" id="CHEBI:57416"/>
        <dbReference type="ChEBI" id="CHEBI:57822"/>
        <dbReference type="ChEBI" id="CHEBI:456216"/>
        <dbReference type="EC" id="6.3.2.4"/>
    </reaction>
</comment>
<comment type="cofactor">
    <cofactor evidence="1">
        <name>Mg(2+)</name>
        <dbReference type="ChEBI" id="CHEBI:18420"/>
    </cofactor>
    <cofactor evidence="1">
        <name>Mn(2+)</name>
        <dbReference type="ChEBI" id="CHEBI:29035"/>
    </cofactor>
    <text evidence="1">Binds 2 magnesium or manganese ions per subunit.</text>
</comment>
<comment type="pathway">
    <text evidence="2">Cell wall biogenesis; peptidoglycan biosynthesis.</text>
</comment>
<comment type="subcellular location">
    <subcellularLocation>
        <location evidence="2">Cytoplasm</location>
    </subcellularLocation>
</comment>
<comment type="similarity">
    <text evidence="2">Belongs to the D-alanine--D-alanine ligase family.</text>
</comment>
<protein>
    <recommendedName>
        <fullName evidence="2">D-alanine--D-alanine ligase</fullName>
        <ecNumber evidence="2">6.3.2.4</ecNumber>
    </recommendedName>
    <alternativeName>
        <fullName evidence="2">D-Ala-D-Ala ligase</fullName>
    </alternativeName>
    <alternativeName>
        <fullName evidence="2">D-alanylalanine synthetase</fullName>
    </alternativeName>
</protein>
<feature type="chain" id="PRO_1000091219" description="D-alanine--D-alanine ligase">
    <location>
        <begin position="1"/>
        <end position="306"/>
    </location>
</feature>
<feature type="domain" description="ATP-grasp" evidence="2">
    <location>
        <begin position="101"/>
        <end position="303"/>
    </location>
</feature>
<feature type="binding site" evidence="2">
    <location>
        <begin position="134"/>
        <end position="189"/>
    </location>
    <ligand>
        <name>ATP</name>
        <dbReference type="ChEBI" id="CHEBI:30616"/>
    </ligand>
</feature>
<feature type="binding site" evidence="2">
    <location>
        <position position="257"/>
    </location>
    <ligand>
        <name>Mg(2+)</name>
        <dbReference type="ChEBI" id="CHEBI:18420"/>
        <label>1</label>
    </ligand>
</feature>
<feature type="binding site" evidence="2">
    <location>
        <position position="270"/>
    </location>
    <ligand>
        <name>Mg(2+)</name>
        <dbReference type="ChEBI" id="CHEBI:18420"/>
        <label>1</label>
    </ligand>
</feature>
<feature type="binding site" evidence="2">
    <location>
        <position position="270"/>
    </location>
    <ligand>
        <name>Mg(2+)</name>
        <dbReference type="ChEBI" id="CHEBI:18420"/>
        <label>2</label>
    </ligand>
</feature>
<feature type="binding site" evidence="2">
    <location>
        <position position="272"/>
    </location>
    <ligand>
        <name>Mg(2+)</name>
        <dbReference type="ChEBI" id="CHEBI:18420"/>
        <label>2</label>
    </ligand>
</feature>
<name>DDL_YERPY</name>
<gene>
    <name evidence="2" type="primary">ddl</name>
    <name type="ordered locus">YPK_3516</name>
</gene>
<keyword id="KW-0067">ATP-binding</keyword>
<keyword id="KW-0133">Cell shape</keyword>
<keyword id="KW-0961">Cell wall biogenesis/degradation</keyword>
<keyword id="KW-0963">Cytoplasm</keyword>
<keyword id="KW-0436">Ligase</keyword>
<keyword id="KW-0460">Magnesium</keyword>
<keyword id="KW-0464">Manganese</keyword>
<keyword id="KW-0479">Metal-binding</keyword>
<keyword id="KW-0547">Nucleotide-binding</keyword>
<keyword id="KW-0573">Peptidoglycan synthesis</keyword>
<organism>
    <name type="scientific">Yersinia pseudotuberculosis serotype O:3 (strain YPIII)</name>
    <dbReference type="NCBI Taxonomy" id="502800"/>
    <lineage>
        <taxon>Bacteria</taxon>
        <taxon>Pseudomonadati</taxon>
        <taxon>Pseudomonadota</taxon>
        <taxon>Gammaproteobacteria</taxon>
        <taxon>Enterobacterales</taxon>
        <taxon>Yersiniaceae</taxon>
        <taxon>Yersinia</taxon>
    </lineage>
</organism>
<sequence>MAEKVAVLLGGTSAEREVSLLSGQAVLAGLKEAGIDAYGVDTKDFPVTQLKEQGFDKVFIALHGRGGEDGTLQGVLEFLQLPYTGSGVMASALTMDKLRTKLVWQALGLPISPYVALNRQQFETLSPEELVACVAKLGLPLIVKPSHEGSSVGMSKVDHASELQKALVEAFQHDSDVLIEKWLSGPEFTVAILGDEVLPSIRIQPPGVFYDYDAKYLSDKTQYFCPSGLSDESEQQLAALALQAYHALDCSGWGRVDVMQDRDGHFYLLEVNTSPGMTSHSLVPMAARQYGLSFSQLVARILMLAD</sequence>
<reference key="1">
    <citation type="submission" date="2008-02" db="EMBL/GenBank/DDBJ databases">
        <title>Complete sequence of Yersinia pseudotuberculosis YPIII.</title>
        <authorList>
            <consortium name="US DOE Joint Genome Institute"/>
            <person name="Copeland A."/>
            <person name="Lucas S."/>
            <person name="Lapidus A."/>
            <person name="Glavina del Rio T."/>
            <person name="Dalin E."/>
            <person name="Tice H."/>
            <person name="Bruce D."/>
            <person name="Goodwin L."/>
            <person name="Pitluck S."/>
            <person name="Munk A.C."/>
            <person name="Brettin T."/>
            <person name="Detter J.C."/>
            <person name="Han C."/>
            <person name="Tapia R."/>
            <person name="Schmutz J."/>
            <person name="Larimer F."/>
            <person name="Land M."/>
            <person name="Hauser L."/>
            <person name="Challacombe J.F."/>
            <person name="Green L."/>
            <person name="Lindler L.E."/>
            <person name="Nikolich M.P."/>
            <person name="Richardson P."/>
        </authorList>
    </citation>
    <scope>NUCLEOTIDE SEQUENCE [LARGE SCALE GENOMIC DNA]</scope>
    <source>
        <strain>YPIII</strain>
    </source>
</reference>